<comment type="function">
    <text evidence="2">Converts carnitine to trimethylamine and malic semialdehyde. Acts on both enantiomers.</text>
</comment>
<comment type="catalytic activity">
    <reaction evidence="1 2">
        <text>(R)-carnitine + NADH + O2 + H(+) = (3R)-3-hydroxy-4-oxobutanoate + trimethylamine + NAD(+) + H2O</text>
        <dbReference type="Rhea" id="RHEA:55396"/>
        <dbReference type="ChEBI" id="CHEBI:15377"/>
        <dbReference type="ChEBI" id="CHEBI:15378"/>
        <dbReference type="ChEBI" id="CHEBI:15379"/>
        <dbReference type="ChEBI" id="CHEBI:16347"/>
        <dbReference type="ChEBI" id="CHEBI:57540"/>
        <dbReference type="ChEBI" id="CHEBI:57945"/>
        <dbReference type="ChEBI" id="CHEBI:58389"/>
        <dbReference type="ChEBI" id="CHEBI:138809"/>
        <dbReference type="EC" id="1.14.13.239"/>
    </reaction>
</comment>
<comment type="catalytic activity">
    <reaction evidence="1 2">
        <text>(R)-carnitine + NADPH + O2 + H(+) = (3R)-3-hydroxy-4-oxobutanoate + trimethylamine + NADP(+) + H2O</text>
        <dbReference type="Rhea" id="RHEA:55368"/>
        <dbReference type="ChEBI" id="CHEBI:15377"/>
        <dbReference type="ChEBI" id="CHEBI:15378"/>
        <dbReference type="ChEBI" id="CHEBI:15379"/>
        <dbReference type="ChEBI" id="CHEBI:16347"/>
        <dbReference type="ChEBI" id="CHEBI:57783"/>
        <dbReference type="ChEBI" id="CHEBI:58349"/>
        <dbReference type="ChEBI" id="CHEBI:58389"/>
        <dbReference type="ChEBI" id="CHEBI:138809"/>
        <dbReference type="EC" id="1.14.13.239"/>
    </reaction>
</comment>
<comment type="cofactor">
    <cofactor evidence="1">
        <name>[2Fe-2S] cluster</name>
        <dbReference type="ChEBI" id="CHEBI:190135"/>
    </cofactor>
    <text evidence="1">Binds 1 [2Fe-2S] cluster per subunit.</text>
</comment>
<comment type="cofactor">
    <cofactor evidence="1">
        <name>Fe cation</name>
        <dbReference type="ChEBI" id="CHEBI:24875"/>
    </cofactor>
    <text evidence="1">Binds 1 Fe cation per subunit.</text>
</comment>
<comment type="activity regulation">
    <text evidence="2">Inhibited by EDTA.</text>
</comment>
<comment type="pathway">
    <text evidence="1 2">Amine and polyamine metabolism; carnitine metabolism.</text>
</comment>
<comment type="subunit">
    <text evidence="1">Composed of an oxygenase subunit and a reductase subunit.</text>
</comment>
<comment type="similarity">
    <text evidence="1 3">Belongs to the bacterial ring-hydroxylating dioxygenase alpha subunit family. CntA subfamily.</text>
</comment>
<keyword id="KW-0001">2Fe-2S</keyword>
<keyword id="KW-0408">Iron</keyword>
<keyword id="KW-0411">Iron-sulfur</keyword>
<keyword id="KW-0479">Metal-binding</keyword>
<keyword id="KW-0520">NAD</keyword>
<keyword id="KW-0521">NADP</keyword>
<keyword id="KW-0560">Oxidoreductase</keyword>
<keyword id="KW-1185">Reference proteome</keyword>
<organism>
    <name type="scientific">Acinetobacter pittii (strain PHEA-2)</name>
    <dbReference type="NCBI Taxonomy" id="871585"/>
    <lineage>
        <taxon>Bacteria</taxon>
        <taxon>Pseudomonadati</taxon>
        <taxon>Pseudomonadota</taxon>
        <taxon>Gammaproteobacteria</taxon>
        <taxon>Moraxellales</taxon>
        <taxon>Moraxellaceae</taxon>
        <taxon>Acinetobacter</taxon>
        <taxon>Acinetobacter calcoaceticus/baumannii complex</taxon>
    </lineage>
</organism>
<sequence length="371" mass="42617">MSAVEKLPEDFCANPDVAWTFPKVFYTSSQVFEHEKEAIFAKSWICVAHGSELAQPNDYITRKVIGENIVIIRGKDSVLRAFYNVCPHRGHELLSGSGKAKNVITCPYHAWTFKLDGSLALARNCDHVESFDKENSSMVPLKVEEYAGFVFINMDENATCVEDQLPEFAERLNQACSVIKDLKLAARFVTETPANWKVIVDNYLECYHCGPAHPGFADSVQVDKYWHTTHQNWTLQYGFARSSEKSFKLDPSVTDPEFHGFWTWPCTMFNVPPGSNFMTVIYEFPVDAETTLQHYDIYFTNEELTQDQKDLIEWYRNVFRPEDLNLVESVQRGLKSRGYRGQGRIMTDKQRSGISEHGIAYFQHLVAQHHK</sequence>
<proteinExistence type="evidence at protein level"/>
<accession>F0KFI5</accession>
<reference key="1">
    <citation type="journal article" date="2011" name="J. Bacteriol.">
        <title>Genome sequence of Acinetobacter calcoaceticus PHEA-2, isolated from industry wastewater.</title>
        <authorList>
            <person name="Zhan Y."/>
            <person name="Yan Y."/>
            <person name="Zhang W."/>
            <person name="Yu H."/>
            <person name="Chen M."/>
            <person name="Lu W."/>
            <person name="Ping S."/>
            <person name="Peng Z."/>
            <person name="Yuan M."/>
            <person name="Zhou Z."/>
            <person name="Elmerich C."/>
            <person name="Lin M."/>
        </authorList>
    </citation>
    <scope>NUCLEOTIDE SEQUENCE [LARGE SCALE GENOMIC DNA]</scope>
    <source>
        <strain>PHEA-2</strain>
    </source>
</reference>
<reference key="2">
    <citation type="journal article" date="1994" name="Bioorg. Med. Chem.">
        <title>L-carnitine via enzyme-catalyzed oxidative kinetic resolution.</title>
        <authorList>
            <person name="Ditullio D."/>
            <person name="Anderson D."/>
            <person name="Chen C.S."/>
            <person name="Sih C.J."/>
        </authorList>
    </citation>
    <scope>FUNCTION</scope>
    <scope>CATALYTIC ACTIVITY</scope>
    <scope>ACTIVITY REGULATION</scope>
    <scope>PATHWAY</scope>
    <source>
        <strain>ATCC 39648</strain>
    </source>
</reference>
<evidence type="ECO:0000255" key="1">
    <source>
        <dbReference type="HAMAP-Rule" id="MF_02097"/>
    </source>
</evidence>
<evidence type="ECO:0000269" key="2">
    <source>
    </source>
</evidence>
<evidence type="ECO:0000305" key="3"/>
<evidence type="ECO:0000312" key="4">
    <source>
        <dbReference type="EMBL" id="ADY80705.1"/>
    </source>
</evidence>
<name>CNTA_ACIP2</name>
<protein>
    <recommendedName>
        <fullName evidence="1 3">Carnitine monooxygenase oxygenase subunit</fullName>
        <ecNumber evidence="1 2">1.14.13.239</ecNumber>
    </recommendedName>
    <alternativeName>
        <fullName evidence="1 3">Carnitine monooxygenase alpha subunit</fullName>
    </alternativeName>
</protein>
<feature type="chain" id="PRO_0000442687" description="Carnitine monooxygenase oxygenase subunit">
    <location>
        <begin position="1"/>
        <end position="371"/>
    </location>
</feature>
<feature type="domain" description="Rieske" evidence="1">
    <location>
        <begin position="44"/>
        <end position="152"/>
    </location>
</feature>
<feature type="binding site" evidence="1">
    <location>
        <position position="86"/>
    </location>
    <ligand>
        <name>[2Fe-2S] cluster</name>
        <dbReference type="ChEBI" id="CHEBI:190135"/>
    </ligand>
</feature>
<feature type="binding site" evidence="1">
    <location>
        <position position="88"/>
    </location>
    <ligand>
        <name>[2Fe-2S] cluster</name>
        <dbReference type="ChEBI" id="CHEBI:190135"/>
    </ligand>
</feature>
<feature type="binding site" evidence="1">
    <location>
        <position position="106"/>
    </location>
    <ligand>
        <name>[2Fe-2S] cluster</name>
        <dbReference type="ChEBI" id="CHEBI:190135"/>
    </ligand>
</feature>
<feature type="binding site" evidence="1">
    <location>
        <position position="109"/>
    </location>
    <ligand>
        <name>[2Fe-2S] cluster</name>
        <dbReference type="ChEBI" id="CHEBI:190135"/>
    </ligand>
</feature>
<feature type="binding site" evidence="1">
    <location>
        <position position="208"/>
    </location>
    <ligand>
        <name>Fe cation</name>
        <dbReference type="ChEBI" id="CHEBI:24875"/>
    </ligand>
</feature>
<feature type="binding site" evidence="1">
    <location>
        <position position="213"/>
    </location>
    <ligand>
        <name>Fe cation</name>
        <dbReference type="ChEBI" id="CHEBI:24875"/>
    </ligand>
</feature>
<feature type="binding site" evidence="1">
    <location>
        <position position="323"/>
    </location>
    <ligand>
        <name>Fe cation</name>
        <dbReference type="ChEBI" id="CHEBI:24875"/>
    </ligand>
</feature>
<dbReference type="EC" id="1.14.13.239" evidence="1 2"/>
<dbReference type="EMBL" id="CP002177">
    <property type="protein sequence ID" value="ADY80705.1"/>
    <property type="molecule type" value="Genomic_DNA"/>
</dbReference>
<dbReference type="RefSeq" id="YP_004994387.1">
    <property type="nucleotide sequence ID" value="NC_016603.1"/>
</dbReference>
<dbReference type="SMR" id="F0KFI5"/>
<dbReference type="STRING" id="871585.BDGL_000119"/>
<dbReference type="GeneID" id="11638294"/>
<dbReference type="KEGG" id="acc:BDGL_000119"/>
<dbReference type="PATRIC" id="fig|871585.3.peg.118"/>
<dbReference type="eggNOG" id="COG4638">
    <property type="taxonomic scope" value="Bacteria"/>
</dbReference>
<dbReference type="HOGENOM" id="CLU_026244_3_0_6"/>
<dbReference type="OrthoDB" id="9769355at2"/>
<dbReference type="BioCyc" id="MetaCyc:MONOMER-8604"/>
<dbReference type="UniPathway" id="UPA00117"/>
<dbReference type="Proteomes" id="UP000007477">
    <property type="component" value="Chromosome"/>
</dbReference>
<dbReference type="GO" id="GO:0051537">
    <property type="term" value="F:2 iron, 2 sulfur cluster binding"/>
    <property type="evidence" value="ECO:0007669"/>
    <property type="project" value="UniProtKB-UniRule"/>
</dbReference>
<dbReference type="GO" id="GO:0005506">
    <property type="term" value="F:iron ion binding"/>
    <property type="evidence" value="ECO:0007669"/>
    <property type="project" value="InterPro"/>
</dbReference>
<dbReference type="GO" id="GO:0016709">
    <property type="term" value="F:oxidoreductase activity, acting on paired donors, with incorporation or reduction of molecular oxygen, NAD(P)H as one donor, and incorporation of one atom of oxygen"/>
    <property type="evidence" value="ECO:0007669"/>
    <property type="project" value="UniProtKB-UniRule"/>
</dbReference>
<dbReference type="GO" id="GO:0009437">
    <property type="term" value="P:carnitine metabolic process"/>
    <property type="evidence" value="ECO:0007669"/>
    <property type="project" value="UniProtKB-UniRule"/>
</dbReference>
<dbReference type="CDD" id="cd08886">
    <property type="entry name" value="RHO_alpha_C_2"/>
    <property type="match status" value="1"/>
</dbReference>
<dbReference type="CDD" id="cd03469">
    <property type="entry name" value="Rieske_RO_Alpha_N"/>
    <property type="match status" value="1"/>
</dbReference>
<dbReference type="Gene3D" id="3.90.380.10">
    <property type="entry name" value="Naphthalene 1,2-dioxygenase Alpha Subunit, Chain A, domain 1"/>
    <property type="match status" value="2"/>
</dbReference>
<dbReference type="Gene3D" id="2.102.10.10">
    <property type="entry name" value="Rieske [2Fe-2S] iron-sulphur domain"/>
    <property type="match status" value="1"/>
</dbReference>
<dbReference type="HAMAP" id="MF_02097">
    <property type="entry name" value="Carnitine_monoox_A"/>
    <property type="match status" value="1"/>
</dbReference>
<dbReference type="InterPro" id="IPR039004">
    <property type="entry name" value="Carnitine_monoox_A"/>
</dbReference>
<dbReference type="InterPro" id="IPR017941">
    <property type="entry name" value="Rieske_2Fe-2S"/>
</dbReference>
<dbReference type="InterPro" id="IPR036922">
    <property type="entry name" value="Rieske_2Fe-2S_sf"/>
</dbReference>
<dbReference type="InterPro" id="IPR015881">
    <property type="entry name" value="Ring-hydroxy_dOase_2Fe2S_BS"/>
</dbReference>
<dbReference type="InterPro" id="IPR015879">
    <property type="entry name" value="Ring_hydroxy_dOase_asu_C_dom"/>
</dbReference>
<dbReference type="InterPro" id="IPR001663">
    <property type="entry name" value="Rng_hydr_dOase-A"/>
</dbReference>
<dbReference type="PANTHER" id="PTHR43756">
    <property type="entry name" value="CHOLINE MONOOXYGENASE, CHLOROPLASTIC"/>
    <property type="match status" value="1"/>
</dbReference>
<dbReference type="PANTHER" id="PTHR43756:SF5">
    <property type="entry name" value="CHOLINE MONOOXYGENASE, CHLOROPLASTIC"/>
    <property type="match status" value="1"/>
</dbReference>
<dbReference type="Pfam" id="PF00355">
    <property type="entry name" value="Rieske"/>
    <property type="match status" value="1"/>
</dbReference>
<dbReference type="Pfam" id="PF00848">
    <property type="entry name" value="Ring_hydroxyl_A"/>
    <property type="match status" value="1"/>
</dbReference>
<dbReference type="PRINTS" id="PR00090">
    <property type="entry name" value="RNGDIOXGNASE"/>
</dbReference>
<dbReference type="SUPFAM" id="SSF55961">
    <property type="entry name" value="Bet v1-like"/>
    <property type="match status" value="1"/>
</dbReference>
<dbReference type="SUPFAM" id="SSF50022">
    <property type="entry name" value="ISP domain"/>
    <property type="match status" value="1"/>
</dbReference>
<dbReference type="PROSITE" id="PS51296">
    <property type="entry name" value="RIESKE"/>
    <property type="match status" value="1"/>
</dbReference>
<dbReference type="PROSITE" id="PS00570">
    <property type="entry name" value="RING_HYDROXYL_ALPHA"/>
    <property type="match status" value="1"/>
</dbReference>
<gene>
    <name evidence="4" type="primary">yeaW</name>
    <name evidence="4" type="ordered locus">BDGL_000119</name>
</gene>